<organism>
    <name type="scientific">Candida glabrata (strain ATCC 2001 / BCRC 20586 / JCM 3761 / NBRC 0622 / NRRL Y-65 / CBS 138)</name>
    <name type="common">Yeast</name>
    <name type="synonym">Nakaseomyces glabratus</name>
    <dbReference type="NCBI Taxonomy" id="284593"/>
    <lineage>
        <taxon>Eukaryota</taxon>
        <taxon>Fungi</taxon>
        <taxon>Dikarya</taxon>
        <taxon>Ascomycota</taxon>
        <taxon>Saccharomycotina</taxon>
        <taxon>Saccharomycetes</taxon>
        <taxon>Saccharomycetales</taxon>
        <taxon>Saccharomycetaceae</taxon>
        <taxon>Nakaseomyces</taxon>
    </lineage>
</organism>
<evidence type="ECO:0000250" key="1"/>
<evidence type="ECO:0000255" key="2"/>
<evidence type="ECO:0000255" key="3">
    <source>
        <dbReference type="PROSITE-ProRule" id="PRU00077"/>
    </source>
</evidence>
<evidence type="ECO:0000255" key="4">
    <source>
        <dbReference type="PROSITE-ProRule" id="PRU00448"/>
    </source>
</evidence>
<evidence type="ECO:0000305" key="5"/>
<proteinExistence type="inferred from homology"/>
<dbReference type="EMBL" id="CR380956">
    <property type="protein sequence ID" value="CAG60897.1"/>
    <property type="molecule type" value="Genomic_DNA"/>
</dbReference>
<dbReference type="RefSeq" id="XP_447946.1">
    <property type="nucleotide sequence ID" value="XM_447946.1"/>
</dbReference>
<dbReference type="FunCoup" id="Q6FP98">
    <property type="interactions" value="153"/>
</dbReference>
<dbReference type="STRING" id="284593.Q6FP98"/>
<dbReference type="EnsemblFungi" id="CAGL0J05544g-T">
    <property type="protein sequence ID" value="CAGL0J05544g-T-p1"/>
    <property type="gene ID" value="CAGL0J05544g"/>
</dbReference>
<dbReference type="KEGG" id="cgr:2889796"/>
<dbReference type="CGD" id="CAL0133044">
    <property type="gene designation" value="CAGL0J05544g"/>
</dbReference>
<dbReference type="VEuPathDB" id="FungiDB:CAGL0J05544g"/>
<dbReference type="eggNOG" id="KOG0998">
    <property type="taxonomic scope" value="Eukaryota"/>
</dbReference>
<dbReference type="HOGENOM" id="CLU_040829_0_0_1"/>
<dbReference type="InParanoid" id="Q6FP98"/>
<dbReference type="OMA" id="HCLRQRN"/>
<dbReference type="Proteomes" id="UP000002428">
    <property type="component" value="Chromosome J"/>
</dbReference>
<dbReference type="GO" id="GO:0030479">
    <property type="term" value="C:actin cortical patch"/>
    <property type="evidence" value="ECO:0007669"/>
    <property type="project" value="UniProtKB-SubCell"/>
</dbReference>
<dbReference type="GO" id="GO:1990964">
    <property type="term" value="C:actin cytoskeleton-regulatory complex"/>
    <property type="evidence" value="ECO:0007669"/>
    <property type="project" value="EnsemblFungi"/>
</dbReference>
<dbReference type="GO" id="GO:0010008">
    <property type="term" value="C:endosome membrane"/>
    <property type="evidence" value="ECO:0007669"/>
    <property type="project" value="UniProtKB-SubCell"/>
</dbReference>
<dbReference type="GO" id="GO:0005886">
    <property type="term" value="C:plasma membrane"/>
    <property type="evidence" value="ECO:0007669"/>
    <property type="project" value="UniProtKB-SubCell"/>
</dbReference>
<dbReference type="GO" id="GO:0003779">
    <property type="term" value="F:actin binding"/>
    <property type="evidence" value="ECO:0007669"/>
    <property type="project" value="UniProtKB-KW"/>
</dbReference>
<dbReference type="GO" id="GO:0005509">
    <property type="term" value="F:calcium ion binding"/>
    <property type="evidence" value="ECO:0007669"/>
    <property type="project" value="InterPro"/>
</dbReference>
<dbReference type="GO" id="GO:0030674">
    <property type="term" value="F:protein-macromolecule adaptor activity"/>
    <property type="evidence" value="ECO:0007669"/>
    <property type="project" value="EnsemblFungi"/>
</dbReference>
<dbReference type="GO" id="GO:0007015">
    <property type="term" value="P:actin filament organization"/>
    <property type="evidence" value="ECO:0007669"/>
    <property type="project" value="InterPro"/>
</dbReference>
<dbReference type="GO" id="GO:0030476">
    <property type="term" value="P:ascospore wall assembly"/>
    <property type="evidence" value="ECO:0007669"/>
    <property type="project" value="EnsemblFungi"/>
</dbReference>
<dbReference type="GO" id="GO:0006897">
    <property type="term" value="P:endocytosis"/>
    <property type="evidence" value="ECO:0007669"/>
    <property type="project" value="UniProtKB-KW"/>
</dbReference>
<dbReference type="GO" id="GO:0016197">
    <property type="term" value="P:endosomal transport"/>
    <property type="evidence" value="ECO:0007669"/>
    <property type="project" value="TreeGrafter"/>
</dbReference>
<dbReference type="GO" id="GO:0061709">
    <property type="term" value="P:reticulophagy"/>
    <property type="evidence" value="ECO:0007669"/>
    <property type="project" value="EnsemblFungi"/>
</dbReference>
<dbReference type="CDD" id="cd00052">
    <property type="entry name" value="EH"/>
    <property type="match status" value="1"/>
</dbReference>
<dbReference type="FunFam" id="1.10.238.10:FF:000323">
    <property type="entry name" value="Actin cytoskeleton-regulatory complex protein end3"/>
    <property type="match status" value="1"/>
</dbReference>
<dbReference type="Gene3D" id="1.10.238.10">
    <property type="entry name" value="EF-hand"/>
    <property type="match status" value="2"/>
</dbReference>
<dbReference type="InterPro" id="IPR011992">
    <property type="entry name" value="EF-hand-dom_pair"/>
</dbReference>
<dbReference type="InterPro" id="IPR018247">
    <property type="entry name" value="EF_Hand_1_Ca_BS"/>
</dbReference>
<dbReference type="InterPro" id="IPR002048">
    <property type="entry name" value="EF_hand_dom"/>
</dbReference>
<dbReference type="InterPro" id="IPR000261">
    <property type="entry name" value="EH_dom"/>
</dbReference>
<dbReference type="InterPro" id="IPR025604">
    <property type="entry name" value="End3"/>
</dbReference>
<dbReference type="PANTHER" id="PTHR11216">
    <property type="entry name" value="EH DOMAIN"/>
    <property type="match status" value="1"/>
</dbReference>
<dbReference type="Pfam" id="PF12763">
    <property type="entry name" value="EH"/>
    <property type="match status" value="1"/>
</dbReference>
<dbReference type="Pfam" id="PF12761">
    <property type="entry name" value="End3"/>
    <property type="match status" value="1"/>
</dbReference>
<dbReference type="SMART" id="SM00027">
    <property type="entry name" value="EH"/>
    <property type="match status" value="2"/>
</dbReference>
<dbReference type="SUPFAM" id="SSF47473">
    <property type="entry name" value="EF-hand"/>
    <property type="match status" value="2"/>
</dbReference>
<dbReference type="PROSITE" id="PS00018">
    <property type="entry name" value="EF_HAND_1"/>
    <property type="match status" value="1"/>
</dbReference>
<dbReference type="PROSITE" id="PS50222">
    <property type="entry name" value="EF_HAND_2"/>
    <property type="match status" value="2"/>
</dbReference>
<dbReference type="PROSITE" id="PS50031">
    <property type="entry name" value="EH"/>
    <property type="match status" value="2"/>
</dbReference>
<protein>
    <recommendedName>
        <fullName>Actin cytoskeleton-regulatory complex protein END3</fullName>
    </recommendedName>
    <alternativeName>
        <fullName>Endocytosis protein 3</fullName>
    </alternativeName>
</protein>
<reference key="1">
    <citation type="journal article" date="2004" name="Nature">
        <title>Genome evolution in yeasts.</title>
        <authorList>
            <person name="Dujon B."/>
            <person name="Sherman D."/>
            <person name="Fischer G."/>
            <person name="Durrens P."/>
            <person name="Casaregola S."/>
            <person name="Lafontaine I."/>
            <person name="de Montigny J."/>
            <person name="Marck C."/>
            <person name="Neuveglise C."/>
            <person name="Talla E."/>
            <person name="Goffard N."/>
            <person name="Frangeul L."/>
            <person name="Aigle M."/>
            <person name="Anthouard V."/>
            <person name="Babour A."/>
            <person name="Barbe V."/>
            <person name="Barnay S."/>
            <person name="Blanchin S."/>
            <person name="Beckerich J.-M."/>
            <person name="Beyne E."/>
            <person name="Bleykasten C."/>
            <person name="Boisrame A."/>
            <person name="Boyer J."/>
            <person name="Cattolico L."/>
            <person name="Confanioleri F."/>
            <person name="de Daruvar A."/>
            <person name="Despons L."/>
            <person name="Fabre E."/>
            <person name="Fairhead C."/>
            <person name="Ferry-Dumazet H."/>
            <person name="Groppi A."/>
            <person name="Hantraye F."/>
            <person name="Hennequin C."/>
            <person name="Jauniaux N."/>
            <person name="Joyet P."/>
            <person name="Kachouri R."/>
            <person name="Kerrest A."/>
            <person name="Koszul R."/>
            <person name="Lemaire M."/>
            <person name="Lesur I."/>
            <person name="Ma L."/>
            <person name="Muller H."/>
            <person name="Nicaud J.-M."/>
            <person name="Nikolski M."/>
            <person name="Oztas S."/>
            <person name="Ozier-Kalogeropoulos O."/>
            <person name="Pellenz S."/>
            <person name="Potier S."/>
            <person name="Richard G.-F."/>
            <person name="Straub M.-L."/>
            <person name="Suleau A."/>
            <person name="Swennen D."/>
            <person name="Tekaia F."/>
            <person name="Wesolowski-Louvel M."/>
            <person name="Westhof E."/>
            <person name="Wirth B."/>
            <person name="Zeniou-Meyer M."/>
            <person name="Zivanovic Y."/>
            <person name="Bolotin-Fukuhara M."/>
            <person name="Thierry A."/>
            <person name="Bouchier C."/>
            <person name="Caudron B."/>
            <person name="Scarpelli C."/>
            <person name="Gaillardin C."/>
            <person name="Weissenbach J."/>
            <person name="Wincker P."/>
            <person name="Souciet J.-L."/>
        </authorList>
    </citation>
    <scope>NUCLEOTIDE SEQUENCE [LARGE SCALE GENOMIC DNA]</scope>
    <source>
        <strain>ATCC 2001 / BCRC 20586 / JCM 3761 / NBRC 0622 / NRRL Y-65 / CBS 138</strain>
    </source>
</reference>
<gene>
    <name type="primary">END3</name>
    <name type="ordered locus">CAGL0J05544g</name>
</gene>
<keyword id="KW-0009">Actin-binding</keyword>
<keyword id="KW-0106">Calcium</keyword>
<keyword id="KW-1003">Cell membrane</keyword>
<keyword id="KW-0175">Coiled coil</keyword>
<keyword id="KW-0963">Cytoplasm</keyword>
<keyword id="KW-0206">Cytoskeleton</keyword>
<keyword id="KW-0254">Endocytosis</keyword>
<keyword id="KW-0967">Endosome</keyword>
<keyword id="KW-0472">Membrane</keyword>
<keyword id="KW-0479">Metal-binding</keyword>
<keyword id="KW-1185">Reference proteome</keyword>
<keyword id="KW-0677">Repeat</keyword>
<accession>Q6FP98</accession>
<name>END3_CANGA</name>
<comment type="function">
    <text evidence="1">Component of the PAN1 actin cytoskeleton-regulatory complex required for the internalization of endosomes during actin-coupled endocytosis. The complex links the site of endocytosis to the cell membrane-associated actin cytoskeleton. Mediates uptake of external molecules and vacuolar degradation of plasma membrane proteins. Plays a role in the proper organization of the cell membrane-associated actin cytoskeleton and promotes its destabilization (By similarity).</text>
</comment>
<comment type="subunit">
    <text evidence="1">Component of the PAN1 actin cytoskeleton-regulatory complex.</text>
</comment>
<comment type="subcellular location">
    <subcellularLocation>
        <location evidence="1">Cell membrane</location>
        <topology evidence="1">Peripheral membrane protein</topology>
        <orientation evidence="1">Cytoplasmic side</orientation>
    </subcellularLocation>
    <subcellularLocation>
        <location evidence="1">Endosome membrane</location>
        <topology evidence="1">Peripheral membrane protein</topology>
        <orientation evidence="1">Cytoplasmic side</orientation>
    </subcellularLocation>
    <subcellularLocation>
        <location evidence="1">Cytoplasm</location>
        <location evidence="1">Cytoskeleton</location>
        <location evidence="1">Actin patch</location>
    </subcellularLocation>
    <text evidence="1">Cytoplasmic and cortical actin patches.</text>
</comment>
<comment type="similarity">
    <text evidence="5">Belongs to the END3 family.</text>
</comment>
<sequence>MPKLEQFEIKKYWQIFSGLKPVENKVSHDQVLPILYNSKLDSSILNKIWFLADIDDDDNLDFEEFVICMRLIFDMVNKNIDSVPDELPEWLVPGSKAKLIKERQKAKQQENAEIPRQEVPDVDWYISPEDKTYYEKILSTCGPMADGTVTFAELSLALKSKFFNIGVSDMERTWKLINPRDLPSIDRDPAMYFIHCLRQRNDIGTSIPSELPPALAEVCNKQRVEYDLSSKQADLKRLDTKEPTKNDVTKLGDELDRLEHSLENLTTGSTSSTLQGTIKMSKESLNQFKGLLAFMENDLNHPNPDSNANVKYVTDDLDNIDQQVQMLETYLQQKRQELGSLKAEVGST</sequence>
<feature type="chain" id="PRO_0000349444" description="Actin cytoskeleton-regulatory complex protein END3">
    <location>
        <begin position="1"/>
        <end position="348"/>
    </location>
</feature>
<feature type="domain" description="EH 1" evidence="3">
    <location>
        <begin position="8"/>
        <end position="98"/>
    </location>
</feature>
<feature type="domain" description="EF-hand 1" evidence="4">
    <location>
        <begin position="40"/>
        <end position="75"/>
    </location>
</feature>
<feature type="domain" description="EH 2" evidence="3">
    <location>
        <begin position="130"/>
        <end position="222"/>
    </location>
</feature>
<feature type="domain" description="EF-hand 2" evidence="4">
    <location>
        <begin position="146"/>
        <end position="164"/>
    </location>
</feature>
<feature type="coiled-coil region" evidence="2">
    <location>
        <begin position="244"/>
        <end position="345"/>
    </location>
</feature>
<feature type="binding site" evidence="4">
    <location>
        <position position="53"/>
    </location>
    <ligand>
        <name>Ca(2+)</name>
        <dbReference type="ChEBI" id="CHEBI:29108"/>
    </ligand>
</feature>
<feature type="binding site" evidence="4">
    <location>
        <position position="55"/>
    </location>
    <ligand>
        <name>Ca(2+)</name>
        <dbReference type="ChEBI" id="CHEBI:29108"/>
    </ligand>
</feature>
<feature type="binding site" evidence="4">
    <location>
        <position position="57"/>
    </location>
    <ligand>
        <name>Ca(2+)</name>
        <dbReference type="ChEBI" id="CHEBI:29108"/>
    </ligand>
</feature>
<feature type="binding site" evidence="4">
    <location>
        <position position="59"/>
    </location>
    <ligand>
        <name>Ca(2+)</name>
        <dbReference type="ChEBI" id="CHEBI:29108"/>
    </ligand>
</feature>
<feature type="binding site" evidence="4">
    <location>
        <position position="64"/>
    </location>
    <ligand>
        <name>Ca(2+)</name>
        <dbReference type="ChEBI" id="CHEBI:29108"/>
    </ligand>
</feature>